<organism>
    <name type="scientific">Roseiflexus castenholzii (strain DSM 13941 / HLO8)</name>
    <dbReference type="NCBI Taxonomy" id="383372"/>
    <lineage>
        <taxon>Bacteria</taxon>
        <taxon>Bacillati</taxon>
        <taxon>Chloroflexota</taxon>
        <taxon>Chloroflexia</taxon>
        <taxon>Chloroflexales</taxon>
        <taxon>Roseiflexineae</taxon>
        <taxon>Roseiflexaceae</taxon>
        <taxon>Roseiflexus</taxon>
    </lineage>
</organism>
<sequence length="160" mass="17794">MTIAVYPGSFDPVTNGHLDIAARASRIFDTVIMAVFDRPNKQLLFSTDERVALLRESTRHLPRVKVDTYSTLTVDYVRSVGASVIVRGMRAVGDFEAEFQLAQINQTLAPDIDIVLFMASHRYTFFSSSTVREIASLGGDVSWLVPGPVVDALKRVYGRR</sequence>
<proteinExistence type="inferred from homology"/>
<dbReference type="EC" id="2.7.7.3" evidence="1"/>
<dbReference type="EMBL" id="CP000804">
    <property type="protein sequence ID" value="ABU57899.1"/>
    <property type="molecule type" value="Genomic_DNA"/>
</dbReference>
<dbReference type="RefSeq" id="WP_012120324.1">
    <property type="nucleotide sequence ID" value="NC_009767.1"/>
</dbReference>
<dbReference type="SMR" id="A7NK79"/>
<dbReference type="STRING" id="383372.Rcas_1807"/>
<dbReference type="KEGG" id="rca:Rcas_1807"/>
<dbReference type="eggNOG" id="COG0669">
    <property type="taxonomic scope" value="Bacteria"/>
</dbReference>
<dbReference type="HOGENOM" id="CLU_100149_0_1_0"/>
<dbReference type="OrthoDB" id="9806661at2"/>
<dbReference type="UniPathway" id="UPA00241">
    <property type="reaction ID" value="UER00355"/>
</dbReference>
<dbReference type="Proteomes" id="UP000000263">
    <property type="component" value="Chromosome"/>
</dbReference>
<dbReference type="GO" id="GO:0005737">
    <property type="term" value="C:cytoplasm"/>
    <property type="evidence" value="ECO:0007669"/>
    <property type="project" value="UniProtKB-SubCell"/>
</dbReference>
<dbReference type="GO" id="GO:0005524">
    <property type="term" value="F:ATP binding"/>
    <property type="evidence" value="ECO:0007669"/>
    <property type="project" value="UniProtKB-KW"/>
</dbReference>
<dbReference type="GO" id="GO:0004595">
    <property type="term" value="F:pantetheine-phosphate adenylyltransferase activity"/>
    <property type="evidence" value="ECO:0007669"/>
    <property type="project" value="UniProtKB-UniRule"/>
</dbReference>
<dbReference type="GO" id="GO:0015937">
    <property type="term" value="P:coenzyme A biosynthetic process"/>
    <property type="evidence" value="ECO:0007669"/>
    <property type="project" value="UniProtKB-UniRule"/>
</dbReference>
<dbReference type="CDD" id="cd02163">
    <property type="entry name" value="PPAT"/>
    <property type="match status" value="1"/>
</dbReference>
<dbReference type="Gene3D" id="3.40.50.620">
    <property type="entry name" value="HUPs"/>
    <property type="match status" value="1"/>
</dbReference>
<dbReference type="HAMAP" id="MF_00151">
    <property type="entry name" value="PPAT_bact"/>
    <property type="match status" value="1"/>
</dbReference>
<dbReference type="InterPro" id="IPR004821">
    <property type="entry name" value="Cyt_trans-like"/>
</dbReference>
<dbReference type="InterPro" id="IPR001980">
    <property type="entry name" value="PPAT"/>
</dbReference>
<dbReference type="InterPro" id="IPR014729">
    <property type="entry name" value="Rossmann-like_a/b/a_fold"/>
</dbReference>
<dbReference type="NCBIfam" id="TIGR01510">
    <property type="entry name" value="coaD_prev_kdtB"/>
    <property type="match status" value="1"/>
</dbReference>
<dbReference type="NCBIfam" id="TIGR00125">
    <property type="entry name" value="cyt_tran_rel"/>
    <property type="match status" value="1"/>
</dbReference>
<dbReference type="PANTHER" id="PTHR21342">
    <property type="entry name" value="PHOSPHOPANTETHEINE ADENYLYLTRANSFERASE"/>
    <property type="match status" value="1"/>
</dbReference>
<dbReference type="PANTHER" id="PTHR21342:SF1">
    <property type="entry name" value="PHOSPHOPANTETHEINE ADENYLYLTRANSFERASE"/>
    <property type="match status" value="1"/>
</dbReference>
<dbReference type="Pfam" id="PF01467">
    <property type="entry name" value="CTP_transf_like"/>
    <property type="match status" value="1"/>
</dbReference>
<dbReference type="PRINTS" id="PR01020">
    <property type="entry name" value="LPSBIOSNTHSS"/>
</dbReference>
<dbReference type="SUPFAM" id="SSF52374">
    <property type="entry name" value="Nucleotidylyl transferase"/>
    <property type="match status" value="1"/>
</dbReference>
<comment type="function">
    <text evidence="1">Reversibly transfers an adenylyl group from ATP to 4'-phosphopantetheine, yielding dephospho-CoA (dPCoA) and pyrophosphate.</text>
</comment>
<comment type="catalytic activity">
    <reaction evidence="1">
        <text>(R)-4'-phosphopantetheine + ATP + H(+) = 3'-dephospho-CoA + diphosphate</text>
        <dbReference type="Rhea" id="RHEA:19801"/>
        <dbReference type="ChEBI" id="CHEBI:15378"/>
        <dbReference type="ChEBI" id="CHEBI:30616"/>
        <dbReference type="ChEBI" id="CHEBI:33019"/>
        <dbReference type="ChEBI" id="CHEBI:57328"/>
        <dbReference type="ChEBI" id="CHEBI:61723"/>
        <dbReference type="EC" id="2.7.7.3"/>
    </reaction>
</comment>
<comment type="cofactor">
    <cofactor evidence="1">
        <name>Mg(2+)</name>
        <dbReference type="ChEBI" id="CHEBI:18420"/>
    </cofactor>
</comment>
<comment type="pathway">
    <text evidence="1">Cofactor biosynthesis; coenzyme A biosynthesis; CoA from (R)-pantothenate: step 4/5.</text>
</comment>
<comment type="subunit">
    <text evidence="1">Homohexamer.</text>
</comment>
<comment type="subcellular location">
    <subcellularLocation>
        <location evidence="1">Cytoplasm</location>
    </subcellularLocation>
</comment>
<comment type="similarity">
    <text evidence="1">Belongs to the bacterial CoaD family.</text>
</comment>
<gene>
    <name evidence="1" type="primary">coaD</name>
    <name type="ordered locus">Rcas_1807</name>
</gene>
<evidence type="ECO:0000255" key="1">
    <source>
        <dbReference type="HAMAP-Rule" id="MF_00151"/>
    </source>
</evidence>
<reference key="1">
    <citation type="submission" date="2007-08" db="EMBL/GenBank/DDBJ databases">
        <title>Complete sequence of Roseiflexus castenholzii DSM 13941.</title>
        <authorList>
            <consortium name="US DOE Joint Genome Institute"/>
            <person name="Copeland A."/>
            <person name="Lucas S."/>
            <person name="Lapidus A."/>
            <person name="Barry K."/>
            <person name="Glavina del Rio T."/>
            <person name="Dalin E."/>
            <person name="Tice H."/>
            <person name="Pitluck S."/>
            <person name="Thompson L.S."/>
            <person name="Brettin T."/>
            <person name="Bruce D."/>
            <person name="Detter J.C."/>
            <person name="Han C."/>
            <person name="Tapia R."/>
            <person name="Schmutz J."/>
            <person name="Larimer F."/>
            <person name="Land M."/>
            <person name="Hauser L."/>
            <person name="Kyrpides N."/>
            <person name="Mikhailova N."/>
            <person name="Bryant D.A."/>
            <person name="Hanada S."/>
            <person name="Tsukatani Y."/>
            <person name="Richardson P."/>
        </authorList>
    </citation>
    <scope>NUCLEOTIDE SEQUENCE [LARGE SCALE GENOMIC DNA]</scope>
    <source>
        <strain>DSM 13941 / HLO8</strain>
    </source>
</reference>
<accession>A7NK79</accession>
<protein>
    <recommendedName>
        <fullName evidence="1">Phosphopantetheine adenylyltransferase</fullName>
        <ecNumber evidence="1">2.7.7.3</ecNumber>
    </recommendedName>
    <alternativeName>
        <fullName evidence="1">Dephospho-CoA pyrophosphorylase</fullName>
    </alternativeName>
    <alternativeName>
        <fullName evidence="1">Pantetheine-phosphate adenylyltransferase</fullName>
        <shortName evidence="1">PPAT</shortName>
    </alternativeName>
</protein>
<keyword id="KW-0067">ATP-binding</keyword>
<keyword id="KW-0173">Coenzyme A biosynthesis</keyword>
<keyword id="KW-0963">Cytoplasm</keyword>
<keyword id="KW-0460">Magnesium</keyword>
<keyword id="KW-0547">Nucleotide-binding</keyword>
<keyword id="KW-0548">Nucleotidyltransferase</keyword>
<keyword id="KW-1185">Reference proteome</keyword>
<keyword id="KW-0808">Transferase</keyword>
<feature type="chain" id="PRO_1000076781" description="Phosphopantetheine adenylyltransferase">
    <location>
        <begin position="1"/>
        <end position="160"/>
    </location>
</feature>
<feature type="binding site" evidence="1">
    <location>
        <begin position="9"/>
        <end position="10"/>
    </location>
    <ligand>
        <name>ATP</name>
        <dbReference type="ChEBI" id="CHEBI:30616"/>
    </ligand>
</feature>
<feature type="binding site" evidence="1">
    <location>
        <position position="9"/>
    </location>
    <ligand>
        <name>substrate</name>
    </ligand>
</feature>
<feature type="binding site" evidence="1">
    <location>
        <position position="17"/>
    </location>
    <ligand>
        <name>ATP</name>
        <dbReference type="ChEBI" id="CHEBI:30616"/>
    </ligand>
</feature>
<feature type="binding site" evidence="1">
    <location>
        <position position="41"/>
    </location>
    <ligand>
        <name>substrate</name>
    </ligand>
</feature>
<feature type="binding site" evidence="1">
    <location>
        <position position="73"/>
    </location>
    <ligand>
        <name>substrate</name>
    </ligand>
</feature>
<feature type="binding site" evidence="1">
    <location>
        <position position="87"/>
    </location>
    <ligand>
        <name>substrate</name>
    </ligand>
</feature>
<feature type="binding site" evidence="1">
    <location>
        <begin position="88"/>
        <end position="90"/>
    </location>
    <ligand>
        <name>ATP</name>
        <dbReference type="ChEBI" id="CHEBI:30616"/>
    </ligand>
</feature>
<feature type="binding site" evidence="1">
    <location>
        <position position="98"/>
    </location>
    <ligand>
        <name>ATP</name>
        <dbReference type="ChEBI" id="CHEBI:30616"/>
    </ligand>
</feature>
<feature type="binding site" evidence="1">
    <location>
        <begin position="123"/>
        <end position="129"/>
    </location>
    <ligand>
        <name>ATP</name>
        <dbReference type="ChEBI" id="CHEBI:30616"/>
    </ligand>
</feature>
<feature type="site" description="Transition state stabilizer" evidence="1">
    <location>
        <position position="17"/>
    </location>
</feature>
<name>COAD_ROSCS</name>